<proteinExistence type="evidence at protein level"/>
<name>LCN5_MOUSE</name>
<comment type="function">
    <text evidence="4 5">Associates with spermatozoa in the epididymal fluid but does not bind tightly to them. Binds both all-trans and 13-cis retinoic acid. May act as a retinoid carrier protein which is required for epididymal function and/or sperm maturation.</text>
</comment>
<comment type="subcellular location">
    <subcellularLocation>
        <location evidence="4 7">Secreted</location>
    </subcellularLocation>
    <text evidence="4 7">Synthesized by the mid and distal caput of the epididymis and secreted into the epididymal lumen.</text>
</comment>
<comment type="alternative products">
    <event type="alternative splicing"/>
    <isoform>
        <id>A2AJB7-1</id>
        <name evidence="9">1</name>
        <sequence type="displayed"/>
    </isoform>
    <isoform>
        <id>A2AJB7-2</id>
        <name evidence="6">2</name>
        <sequence type="described" ref="VSP_052839"/>
    </isoform>
    <isoform>
        <id>A2AJB7-3</id>
        <name evidence="6">3</name>
        <sequence type="described" ref="VSP_052840"/>
    </isoform>
    <isoform>
        <id>A2AJB7-4</id>
        <name evidence="8">4</name>
        <sequence type="described" ref="VSP_052838"/>
    </isoform>
</comment>
<comment type="tissue specificity">
    <text evidence="3">Epididymal fluid of the caudal and corpus regions (at protein level).</text>
</comment>
<comment type="induction">
    <text evidence="8">Down-regulated to 11% of control levels 5 days after castration and is not detectable by 20 days (at protein level). Levels are partially restored by subsequent testosterone treatment.</text>
</comment>
<comment type="PTM">
    <text>2 different forms with differently processed N-termini exist.</text>
</comment>
<comment type="similarity">
    <text evidence="2">Belongs to the calycin superfamily. Lipocalin family.</text>
</comment>
<comment type="sequence caution" evidence="12">
    <conflict type="erroneous initiation">
        <sequence resource="EMBL-CDS" id="AAD09351"/>
    </conflict>
</comment>
<keyword id="KW-0025">Alternative splicing</keyword>
<keyword id="KW-0903">Direct protein sequencing</keyword>
<keyword id="KW-1015">Disulfide bond</keyword>
<keyword id="KW-1185">Reference proteome</keyword>
<keyword id="KW-0964">Secreted</keyword>
<keyword id="KW-0732">Signal</keyword>
<keyword id="KW-0813">Transport</keyword>
<dbReference type="EMBL" id="U68546">
    <property type="protein sequence ID" value="AAC24316.1"/>
    <property type="molecule type" value="mRNA"/>
</dbReference>
<dbReference type="EMBL" id="U68381">
    <property type="protein sequence ID" value="AAD09351.1"/>
    <property type="status" value="ALT_INIT"/>
    <property type="molecule type" value="Genomic_DNA"/>
</dbReference>
<dbReference type="EMBL" id="AK136629">
    <property type="protein sequence ID" value="BAE23077.1"/>
    <property type="molecule type" value="mRNA"/>
</dbReference>
<dbReference type="EMBL" id="AK162355">
    <property type="protein sequence ID" value="BAE36871.1"/>
    <property type="molecule type" value="mRNA"/>
</dbReference>
<dbReference type="EMBL" id="AL732590">
    <property type="status" value="NOT_ANNOTATED_CDS"/>
    <property type="molecule type" value="Genomic_DNA"/>
</dbReference>
<dbReference type="CCDS" id="CCDS38078.1">
    <molecule id="A2AJB7-3"/>
</dbReference>
<dbReference type="CCDS" id="CCDS38079.1">
    <molecule id="A2AJB7-1"/>
</dbReference>
<dbReference type="CCDS" id="CCDS71003.1">
    <molecule id="A2AJB7-2"/>
</dbReference>
<dbReference type="RefSeq" id="NP_001036095.1">
    <molecule id="A2AJB7-3"/>
    <property type="nucleotide sequence ID" value="NM_001042630.2"/>
</dbReference>
<dbReference type="RefSeq" id="NP_001263186.1">
    <molecule id="A2AJB7-2"/>
    <property type="nucleotide sequence ID" value="NM_001276257.1"/>
</dbReference>
<dbReference type="RefSeq" id="NP_031973.2">
    <molecule id="A2AJB7-1"/>
    <property type="nucleotide sequence ID" value="NM_007947.3"/>
</dbReference>
<dbReference type="SMR" id="A2AJB7"/>
<dbReference type="FunCoup" id="A2AJB7">
    <property type="interactions" value="53"/>
</dbReference>
<dbReference type="STRING" id="10090.ENSMUSP00000028306"/>
<dbReference type="PhosphoSitePlus" id="A2AJB7"/>
<dbReference type="PaxDb" id="10090-ENSMUSP00000028306"/>
<dbReference type="ProteomicsDB" id="292241">
    <molecule id="A2AJB7-1"/>
</dbReference>
<dbReference type="ProteomicsDB" id="292242">
    <molecule id="A2AJB7-2"/>
</dbReference>
<dbReference type="ProteomicsDB" id="292243">
    <molecule id="A2AJB7-3"/>
</dbReference>
<dbReference type="ProteomicsDB" id="292244">
    <molecule id="A2AJB7-4"/>
</dbReference>
<dbReference type="DNASU" id="13863"/>
<dbReference type="Ensembl" id="ENSMUST00000028306.13">
    <molecule id="A2AJB7-1"/>
    <property type="protein sequence ID" value="ENSMUSP00000028306.7"/>
    <property type="gene ID" value="ENSMUSG00000026937.13"/>
</dbReference>
<dbReference type="Ensembl" id="ENSMUST00000100312.10">
    <molecule id="A2AJB7-2"/>
    <property type="protein sequence ID" value="ENSMUSP00000097887.4"/>
    <property type="gene ID" value="ENSMUSG00000026937.13"/>
</dbReference>
<dbReference type="Ensembl" id="ENSMUST00000100313.4">
    <molecule id="A2AJB7-3"/>
    <property type="protein sequence ID" value="ENSMUSP00000097888.4"/>
    <property type="gene ID" value="ENSMUSG00000026937.13"/>
</dbReference>
<dbReference type="GeneID" id="13863"/>
<dbReference type="KEGG" id="mmu:13863"/>
<dbReference type="UCSC" id="uc008itb.2">
    <molecule id="A2AJB7-1"/>
    <property type="organism name" value="mouse"/>
</dbReference>
<dbReference type="UCSC" id="uc033hlx.1">
    <molecule id="A2AJB7-2"/>
    <property type="organism name" value="mouse"/>
</dbReference>
<dbReference type="AGR" id="MGI:1277241"/>
<dbReference type="CTD" id="13863"/>
<dbReference type="MGI" id="MGI:1277241">
    <property type="gene designation" value="Lcn5"/>
</dbReference>
<dbReference type="VEuPathDB" id="HostDB:ENSMUSG00000026937"/>
<dbReference type="eggNOG" id="ENOG502TDU9">
    <property type="taxonomic scope" value="Eukaryota"/>
</dbReference>
<dbReference type="GeneTree" id="ENSGT01050000244868"/>
<dbReference type="HOGENOM" id="CLU_1424476_0_0_1"/>
<dbReference type="InParanoid" id="A2AJB7"/>
<dbReference type="OMA" id="HALYEED"/>
<dbReference type="OrthoDB" id="9627583at2759"/>
<dbReference type="PhylomeDB" id="A2AJB7"/>
<dbReference type="TreeFam" id="TF336103"/>
<dbReference type="BioGRID-ORCS" id="13863">
    <property type="hits" value="4 hits in 78 CRISPR screens"/>
</dbReference>
<dbReference type="PRO" id="PR:A2AJB7"/>
<dbReference type="Proteomes" id="UP000000589">
    <property type="component" value="Chromosome 2"/>
</dbReference>
<dbReference type="RNAct" id="A2AJB7">
    <property type="molecule type" value="protein"/>
</dbReference>
<dbReference type="Bgee" id="ENSMUSG00000026937">
    <property type="expression patterns" value="Expressed in gonadal fat pad and 8 other cell types or tissues"/>
</dbReference>
<dbReference type="GO" id="GO:0005615">
    <property type="term" value="C:extracellular space"/>
    <property type="evidence" value="ECO:0000304"/>
    <property type="project" value="MGI"/>
</dbReference>
<dbReference type="GO" id="GO:0005501">
    <property type="term" value="F:retinoid binding"/>
    <property type="evidence" value="ECO:0000304"/>
    <property type="project" value="MGI"/>
</dbReference>
<dbReference type="GO" id="GO:0036094">
    <property type="term" value="F:small molecule binding"/>
    <property type="evidence" value="ECO:0007669"/>
    <property type="project" value="InterPro"/>
</dbReference>
<dbReference type="GO" id="GO:0042573">
    <property type="term" value="P:retinoic acid metabolic process"/>
    <property type="evidence" value="ECO:0000304"/>
    <property type="project" value="MGI"/>
</dbReference>
<dbReference type="Gene3D" id="2.40.128.20">
    <property type="match status" value="1"/>
</dbReference>
<dbReference type="InterPro" id="IPR012674">
    <property type="entry name" value="Calycin"/>
</dbReference>
<dbReference type="InterPro" id="IPR002345">
    <property type="entry name" value="Lipocalin"/>
</dbReference>
<dbReference type="InterPro" id="IPR022272">
    <property type="entry name" value="Lipocalin_CS"/>
</dbReference>
<dbReference type="InterPro" id="IPR000566">
    <property type="entry name" value="Lipocln_cytosolic_FA-bd_dom"/>
</dbReference>
<dbReference type="PANTHER" id="PTHR11430:SF71">
    <property type="entry name" value="EPIDIDYMAL-SPECIFIC LIPOCALIN-5"/>
    <property type="match status" value="1"/>
</dbReference>
<dbReference type="PANTHER" id="PTHR11430">
    <property type="entry name" value="LIPOCALIN"/>
    <property type="match status" value="1"/>
</dbReference>
<dbReference type="Pfam" id="PF00061">
    <property type="entry name" value="Lipocalin"/>
    <property type="match status" value="1"/>
</dbReference>
<dbReference type="PRINTS" id="PR00179">
    <property type="entry name" value="LIPOCALIN"/>
</dbReference>
<dbReference type="PRINTS" id="PR01254">
    <property type="entry name" value="PGNDSYNTHASE"/>
</dbReference>
<dbReference type="SUPFAM" id="SSF50814">
    <property type="entry name" value="Lipocalins"/>
    <property type="match status" value="1"/>
</dbReference>
<dbReference type="PROSITE" id="PS00213">
    <property type="entry name" value="LIPOCALIN"/>
    <property type="match status" value="1"/>
</dbReference>
<protein>
    <recommendedName>
        <fullName>Epididymal-specific lipocalin-5</fullName>
    </recommendedName>
    <alternativeName>
        <fullName>Epididymal retinoic acid-binding protein</fullName>
        <shortName>E-RABP</shortName>
        <shortName>mE-RABP</shortName>
    </alternativeName>
    <alternativeName>
        <fullName>Epididymal secretory protein 10</fullName>
        <shortName>MEP 10</shortName>
    </alternativeName>
    <component>
        <recommendedName>
            <fullName>Epididymal-specific lipocalin-5, major form</fullName>
        </recommendedName>
    </component>
    <component>
        <recommendedName>
            <fullName>Epididymal-specific lipocalin-5, minor form</fullName>
        </recommendedName>
    </component>
</protein>
<accession>A2AJB7</accession>
<accession>O88787</accession>
<accession>Q3TS05</accession>
<accession>Q3UW42</accession>
<accession>Q9R2C6</accession>
<gene>
    <name evidence="16" type="primary">Lcn5</name>
    <name evidence="14" type="synonym">Mep10</name>
</gene>
<evidence type="ECO:0000250" key="1">
    <source>
        <dbReference type="UniProtKB" id="P06911"/>
    </source>
</evidence>
<evidence type="ECO:0000255" key="2"/>
<evidence type="ECO:0000269" key="3">
    <source>
    </source>
</evidence>
<evidence type="ECO:0000269" key="4">
    <source>
    </source>
</evidence>
<evidence type="ECO:0000269" key="5">
    <source>
    </source>
</evidence>
<evidence type="ECO:0000269" key="6">
    <source>
    </source>
</evidence>
<evidence type="ECO:0000269" key="7">
    <source>
    </source>
</evidence>
<evidence type="ECO:0000269" key="8">
    <source>
    </source>
</evidence>
<evidence type="ECO:0000269" key="9">
    <source>
    </source>
</evidence>
<evidence type="ECO:0000303" key="10">
    <source>
    </source>
</evidence>
<evidence type="ECO:0000303" key="11">
    <source>
    </source>
</evidence>
<evidence type="ECO:0000305" key="12"/>
<evidence type="ECO:0000312" key="13">
    <source>
        <dbReference type="EMBL" id="AAC24316.1"/>
    </source>
</evidence>
<evidence type="ECO:0000312" key="14">
    <source>
        <dbReference type="EMBL" id="AAD09351.1"/>
    </source>
</evidence>
<evidence type="ECO:0000312" key="15">
    <source>
        <dbReference type="EMBL" id="BAE23077.1"/>
    </source>
</evidence>
<evidence type="ECO:0000312" key="16">
    <source>
        <dbReference type="MGI" id="MGI:1277241"/>
    </source>
</evidence>
<reference evidence="12 13" key="1">
    <citation type="journal article" date="1998" name="Endocrinology">
        <title>Molecular cloning and hormonal regulation of a murine epididymal retinoic acid-binding protein messenger ribonucleic acid.</title>
        <authorList>
            <person name="Lareyre J.-J."/>
            <person name="Zheng W.-L."/>
            <person name="Zhao G.-Q."/>
            <person name="Kasper S."/>
            <person name="Newcomer M.E."/>
            <person name="Matusik R.J."/>
            <person name="Ong D.E."/>
            <person name="Orgebin-Crist M.-C."/>
        </authorList>
    </citation>
    <scope>NUCLEOTIDE SEQUENCE [MRNA] (ISOFORM 4)</scope>
    <scope>INDUCTION</scope>
    <source>
        <strain evidence="8">SWR/J</strain>
    </source>
</reference>
<reference evidence="12 14" key="2">
    <citation type="journal article" date="1998" name="Mol. Reprod. Dev.">
        <title>Genomic organization and chromosomal localization of the murine epididymal retinoic acid-binding protein (mE-RABP) gene.</title>
        <authorList>
            <person name="Lareyre J.-J."/>
            <person name="Mattei M.-G."/>
            <person name="Kasper S."/>
            <person name="Ong D.E."/>
            <person name="Matusik R.J."/>
            <person name="Orgebin-Crist M.-C."/>
        </authorList>
    </citation>
    <scope>NUCLEOTIDE SEQUENCE [GENOMIC DNA]</scope>
    <scope>ALTERNATIVE SPLICING (ISOFORM 1)</scope>
    <source>
        <strain evidence="14">129</strain>
    </source>
</reference>
<reference evidence="12 15" key="3">
    <citation type="journal article" date="2005" name="Science">
        <title>The transcriptional landscape of the mammalian genome.</title>
        <authorList>
            <person name="Carninci P."/>
            <person name="Kasukawa T."/>
            <person name="Katayama S."/>
            <person name="Gough J."/>
            <person name="Frith M.C."/>
            <person name="Maeda N."/>
            <person name="Oyama R."/>
            <person name="Ravasi T."/>
            <person name="Lenhard B."/>
            <person name="Wells C."/>
            <person name="Kodzius R."/>
            <person name="Shimokawa K."/>
            <person name="Bajic V.B."/>
            <person name="Brenner S.E."/>
            <person name="Batalov S."/>
            <person name="Forrest A.R."/>
            <person name="Zavolan M."/>
            <person name="Davis M.J."/>
            <person name="Wilming L.G."/>
            <person name="Aidinis V."/>
            <person name="Allen J.E."/>
            <person name="Ambesi-Impiombato A."/>
            <person name="Apweiler R."/>
            <person name="Aturaliya R.N."/>
            <person name="Bailey T.L."/>
            <person name="Bansal M."/>
            <person name="Baxter L."/>
            <person name="Beisel K.W."/>
            <person name="Bersano T."/>
            <person name="Bono H."/>
            <person name="Chalk A.M."/>
            <person name="Chiu K.P."/>
            <person name="Choudhary V."/>
            <person name="Christoffels A."/>
            <person name="Clutterbuck D.R."/>
            <person name="Crowe M.L."/>
            <person name="Dalla E."/>
            <person name="Dalrymple B.P."/>
            <person name="de Bono B."/>
            <person name="Della Gatta G."/>
            <person name="di Bernardo D."/>
            <person name="Down T."/>
            <person name="Engstrom P."/>
            <person name="Fagiolini M."/>
            <person name="Faulkner G."/>
            <person name="Fletcher C.F."/>
            <person name="Fukushima T."/>
            <person name="Furuno M."/>
            <person name="Futaki S."/>
            <person name="Gariboldi M."/>
            <person name="Georgii-Hemming P."/>
            <person name="Gingeras T.R."/>
            <person name="Gojobori T."/>
            <person name="Green R.E."/>
            <person name="Gustincich S."/>
            <person name="Harbers M."/>
            <person name="Hayashi Y."/>
            <person name="Hensch T.K."/>
            <person name="Hirokawa N."/>
            <person name="Hill D."/>
            <person name="Huminiecki L."/>
            <person name="Iacono M."/>
            <person name="Ikeo K."/>
            <person name="Iwama A."/>
            <person name="Ishikawa T."/>
            <person name="Jakt M."/>
            <person name="Kanapin A."/>
            <person name="Katoh M."/>
            <person name="Kawasawa Y."/>
            <person name="Kelso J."/>
            <person name="Kitamura H."/>
            <person name="Kitano H."/>
            <person name="Kollias G."/>
            <person name="Krishnan S.P."/>
            <person name="Kruger A."/>
            <person name="Kummerfeld S.K."/>
            <person name="Kurochkin I.V."/>
            <person name="Lareau L.F."/>
            <person name="Lazarevic D."/>
            <person name="Lipovich L."/>
            <person name="Liu J."/>
            <person name="Liuni S."/>
            <person name="McWilliam S."/>
            <person name="Madan Babu M."/>
            <person name="Madera M."/>
            <person name="Marchionni L."/>
            <person name="Matsuda H."/>
            <person name="Matsuzawa S."/>
            <person name="Miki H."/>
            <person name="Mignone F."/>
            <person name="Miyake S."/>
            <person name="Morris K."/>
            <person name="Mottagui-Tabar S."/>
            <person name="Mulder N."/>
            <person name="Nakano N."/>
            <person name="Nakauchi H."/>
            <person name="Ng P."/>
            <person name="Nilsson R."/>
            <person name="Nishiguchi S."/>
            <person name="Nishikawa S."/>
            <person name="Nori F."/>
            <person name="Ohara O."/>
            <person name="Okazaki Y."/>
            <person name="Orlando V."/>
            <person name="Pang K.C."/>
            <person name="Pavan W.J."/>
            <person name="Pavesi G."/>
            <person name="Pesole G."/>
            <person name="Petrovsky N."/>
            <person name="Piazza S."/>
            <person name="Reed J."/>
            <person name="Reid J.F."/>
            <person name="Ring B.Z."/>
            <person name="Ringwald M."/>
            <person name="Rost B."/>
            <person name="Ruan Y."/>
            <person name="Salzberg S.L."/>
            <person name="Sandelin A."/>
            <person name="Schneider C."/>
            <person name="Schoenbach C."/>
            <person name="Sekiguchi K."/>
            <person name="Semple C.A."/>
            <person name="Seno S."/>
            <person name="Sessa L."/>
            <person name="Sheng Y."/>
            <person name="Shibata Y."/>
            <person name="Shimada H."/>
            <person name="Shimada K."/>
            <person name="Silva D."/>
            <person name="Sinclair B."/>
            <person name="Sperling S."/>
            <person name="Stupka E."/>
            <person name="Sugiura K."/>
            <person name="Sultana R."/>
            <person name="Takenaka Y."/>
            <person name="Taki K."/>
            <person name="Tammoja K."/>
            <person name="Tan S.L."/>
            <person name="Tang S."/>
            <person name="Taylor M.S."/>
            <person name="Tegner J."/>
            <person name="Teichmann S.A."/>
            <person name="Ueda H.R."/>
            <person name="van Nimwegen E."/>
            <person name="Verardo R."/>
            <person name="Wei C.L."/>
            <person name="Yagi K."/>
            <person name="Yamanishi H."/>
            <person name="Zabarovsky E."/>
            <person name="Zhu S."/>
            <person name="Zimmer A."/>
            <person name="Hide W."/>
            <person name="Bult C."/>
            <person name="Grimmond S.M."/>
            <person name="Teasdale R.D."/>
            <person name="Liu E.T."/>
            <person name="Brusic V."/>
            <person name="Quackenbush J."/>
            <person name="Wahlestedt C."/>
            <person name="Mattick J.S."/>
            <person name="Hume D.A."/>
            <person name="Kai C."/>
            <person name="Sasaki D."/>
            <person name="Tomaru Y."/>
            <person name="Fukuda S."/>
            <person name="Kanamori-Katayama M."/>
            <person name="Suzuki M."/>
            <person name="Aoki J."/>
            <person name="Arakawa T."/>
            <person name="Iida J."/>
            <person name="Imamura K."/>
            <person name="Itoh M."/>
            <person name="Kato T."/>
            <person name="Kawaji H."/>
            <person name="Kawagashira N."/>
            <person name="Kawashima T."/>
            <person name="Kojima M."/>
            <person name="Kondo S."/>
            <person name="Konno H."/>
            <person name="Nakano K."/>
            <person name="Ninomiya N."/>
            <person name="Nishio T."/>
            <person name="Okada M."/>
            <person name="Plessy C."/>
            <person name="Shibata K."/>
            <person name="Shiraki T."/>
            <person name="Suzuki S."/>
            <person name="Tagami M."/>
            <person name="Waki K."/>
            <person name="Watahiki A."/>
            <person name="Okamura-Oho Y."/>
            <person name="Suzuki H."/>
            <person name="Kawai J."/>
            <person name="Hayashizaki Y."/>
        </authorList>
    </citation>
    <scope>NUCLEOTIDE SEQUENCE [LARGE SCALE MRNA] (ISOFORMS 2 AND 3)</scope>
    <source>
        <strain evidence="15">C57BL/6J</strain>
        <tissue evidence="15">Epididymis</tissue>
    </source>
</reference>
<reference key="4">
    <citation type="journal article" date="2009" name="PLoS Biol.">
        <title>Lineage-specific biology revealed by a finished genome assembly of the mouse.</title>
        <authorList>
            <person name="Church D.M."/>
            <person name="Goodstadt L."/>
            <person name="Hillier L.W."/>
            <person name="Zody M.C."/>
            <person name="Goldstein S."/>
            <person name="She X."/>
            <person name="Bult C.J."/>
            <person name="Agarwala R."/>
            <person name="Cherry J.L."/>
            <person name="DiCuccio M."/>
            <person name="Hlavina W."/>
            <person name="Kapustin Y."/>
            <person name="Meric P."/>
            <person name="Maglott D."/>
            <person name="Birtle Z."/>
            <person name="Marques A.C."/>
            <person name="Graves T."/>
            <person name="Zhou S."/>
            <person name="Teague B."/>
            <person name="Potamousis K."/>
            <person name="Churas C."/>
            <person name="Place M."/>
            <person name="Herschleb J."/>
            <person name="Runnheim R."/>
            <person name="Forrest D."/>
            <person name="Amos-Landgraf J."/>
            <person name="Schwartz D.C."/>
            <person name="Cheng Z."/>
            <person name="Lindblad-Toh K."/>
            <person name="Eichler E.E."/>
            <person name="Ponting C.P."/>
        </authorList>
    </citation>
    <scope>NUCLEOTIDE SEQUENCE [LARGE SCALE GENOMIC DNA]</scope>
    <source>
        <strain>C57BL/6J</strain>
    </source>
</reference>
<reference evidence="12" key="5">
    <citation type="journal article" date="1992" name="Biol. Reprod.">
        <title>Isolation, immunolocalization, and sperm-association of three proteins of 18, 25, and 29 kilodaltons secreted by the mouse epididymis.</title>
        <authorList>
            <person name="Rankin T.L."/>
            <person name="Tsuruta K.J."/>
            <person name="Holland M.K."/>
            <person name="Griswold M.D."/>
            <person name="Orgebin-Crist M.-C."/>
        </authorList>
    </citation>
    <scope>PROTEIN SEQUENCE OF 27-39</scope>
    <scope>FUNCTION</scope>
    <scope>SUBCELLULAR LOCATION</scope>
    <source>
        <strain evidence="4">C57BL/6J</strain>
    </source>
</reference>
<reference evidence="12" key="6">
    <citation type="journal article" date="1990" name="Biol. Reprod.">
        <title>Secretion and transport of mouse epididymal proteins after injection of 35S-methionine.</title>
        <authorList>
            <person name="Vreeburg J.T.M."/>
            <person name="Holland M.K."/>
            <person name="Cornwall G.A."/>
            <person name="Orgebin-Crist M.-C."/>
        </authorList>
    </citation>
    <scope>SUBCELLULAR LOCATION</scope>
</reference>
<reference evidence="12" key="7">
    <citation type="journal article" date="1992" name="Biol. Reprod.">
        <title>The 18-kDa mouse epididymal protein (MEP 10) binds retinoic acid.</title>
        <authorList>
            <person name="Rankin T.L."/>
            <person name="Ong D.E."/>
            <person name="Orgebin-Crist M.-C."/>
        </authorList>
    </citation>
    <scope>FUNCTION</scope>
</reference>
<reference evidence="12" key="8">
    <citation type="journal article" date="2003" name="Proteomics">
        <title>Profiling and imaging proteins in the mouse epididymis by imaging mass spectrometry.</title>
        <authorList>
            <person name="Chaurand P."/>
            <person name="Fouchecourt S."/>
            <person name="DaGue B.B."/>
            <person name="Xu B.J."/>
            <person name="Reyzer M.L."/>
            <person name="Orgebin-Crist M.-C."/>
            <person name="Caprioli R.M."/>
        </authorList>
    </citation>
    <scope>TISSUE SPECIFICITY</scope>
</reference>
<feature type="signal peptide" evidence="4">
    <location>
        <begin position="1"/>
        <end position="26"/>
    </location>
</feature>
<feature type="chain" id="PRO_0000339292" description="Epididymal-specific lipocalin-5, major form" evidence="4">
    <location>
        <begin position="27"/>
        <end position="192"/>
    </location>
</feature>
<feature type="chain" id="PRO_0000339293" description="Epididymal-specific lipocalin-5, minor form" evidence="4">
    <location>
        <begin position="30"/>
        <end position="192"/>
    </location>
</feature>
<feature type="disulfide bond" evidence="1">
    <location>
        <begin position="89"/>
        <end position="183"/>
    </location>
</feature>
<feature type="splice variant" id="VSP_052838" description="In isoform 4." evidence="11">
    <original>MCSVARHMESIMLFTLLGLCVGLAAGTEA</original>
    <variation>M</variation>
    <location>
        <begin position="1"/>
        <end position="29"/>
    </location>
</feature>
<feature type="splice variant" id="VSP_052839" description="In isoform 2." evidence="10">
    <original>LTCVNALQSGQI</original>
    <variation>YIEIKALPKPGS</variation>
    <location>
        <begin position="181"/>
        <end position="192"/>
    </location>
</feature>
<feature type="splice variant" id="VSP_052840" description="In isoform 3." evidence="10">
    <location>
        <begin position="181"/>
        <end position="192"/>
    </location>
</feature>
<organism>
    <name type="scientific">Mus musculus</name>
    <name type="common">Mouse</name>
    <dbReference type="NCBI Taxonomy" id="10090"/>
    <lineage>
        <taxon>Eukaryota</taxon>
        <taxon>Metazoa</taxon>
        <taxon>Chordata</taxon>
        <taxon>Craniata</taxon>
        <taxon>Vertebrata</taxon>
        <taxon>Euteleostomi</taxon>
        <taxon>Mammalia</taxon>
        <taxon>Eutheria</taxon>
        <taxon>Euarchontoglires</taxon>
        <taxon>Glires</taxon>
        <taxon>Rodentia</taxon>
        <taxon>Myomorpha</taxon>
        <taxon>Muroidea</taxon>
        <taxon>Muridae</taxon>
        <taxon>Murinae</taxon>
        <taxon>Mus</taxon>
        <taxon>Mus</taxon>
    </lineage>
</organism>
<sequence>MCSVARHMESIMLFTLLGLCVGLAAGTEAAVVKDFDVNKFLGFWYEIALASKMGAYGLAHKEEKMGAMVVELKENLLALTTTYYNEGHCVLEKVAATQVDGSAKYKVTRISGEKEVVVVATDYMTYTVIDITSLVAGAVHRAMKLYSRSLDNNGEALNNFQKIALKHGFSETDIHILKHDLTCVNALQSGQI</sequence>